<sequence>MARFFPLTLTILLFFIQRIDFCHTLVPANETFKFVNEGELGQYISEYFGDYRPLDPFTSPFQLCFYNQTPTAFTLALRMGLRRTESLMRWVWEANRGNPVDENATLTFGPDGNLVLARSNGQVAWQTSTANKGVVGLKILPNGNMVLYDSKGKFLWQSFDTPTDTLLVGQSLKMGAVTKLVSRASPGENVNGPYSLVMEPKGLHLYYKPTTSPKPIRYYSFSLFTKLNKNESLQNVTFEFENENDQGFAFLLSLKYGTSNSLGGASILNRIKYNTTLSFLRLEIDGNVKIYTYNDKVDYGAWEVTYTLFLKAPPPLFQVSLAATESESSECQLPKKCGNFGLCEESQCVGCPTSSGPVLAWSKTCEPPKLSSCGPKDFHYNKLGGWITT</sequence>
<name>EP1G_DAUCA</name>
<evidence type="ECO:0000255" key="1"/>
<evidence type="ECO:0000255" key="2">
    <source>
        <dbReference type="PROSITE-ProRule" id="PRU00038"/>
    </source>
</evidence>
<evidence type="ECO:0000269" key="3">
    <source>
    </source>
</evidence>
<evidence type="ECO:0000269" key="4">
    <source>
    </source>
</evidence>
<evidence type="ECO:0000303" key="5">
    <source>
    </source>
</evidence>
<evidence type="ECO:0000305" key="6"/>
<evidence type="ECO:0000312" key="7">
    <source>
        <dbReference type="EMBL" id="AAA33136.1"/>
    </source>
</evidence>
<reference evidence="6" key="1">
    <citation type="journal article" date="1993" name="Plant J.">
        <title>The carrot secreted glycoprotein gene EP1 is expressed in the epidermis and has sequence homology to Brassica S-locus glycoproteins.</title>
        <authorList>
            <person name="van Engelen F.A."/>
            <person name="Hartog M.V."/>
            <person name="Thomas T.L."/>
            <person name="Taylor B."/>
            <person name="Sturm A."/>
            <person name="van Kammen A."/>
            <person name="de Vries S.C."/>
        </authorList>
    </citation>
    <scope>NUCLEOTIDE SEQUENCE [MRNA]</scope>
    <scope>PROTEIN SEQUENCE OF 25-29</scope>
    <scope>TISSUE SPECIFICITY</scope>
</reference>
<reference evidence="6" key="2">
    <citation type="journal article" date="1991" name="Eur. J. Biochem.">
        <title>Heterogeneity of the complex N-linked oligosaccharides at specific glycosylation sites of two secreted carrot glycoproteins.</title>
        <authorList>
            <person name="Sturm A."/>
        </authorList>
    </citation>
    <scope>PROTEIN SEQUENCE OF 27-33 AND 272-278</scope>
    <scope>GLYCOSYLATION AT ASN-29 AND ASN-274</scope>
    <scope>STRUCTURE OF CARBOHYDRATE ON ASN-29 AND ASN-274</scope>
</reference>
<reference key="3">
    <citation type="journal article" date="1991" name="Plant Physiol.">
        <title>Heterogeneity and cell type-specific localization of a cell wall glycoprotein from carrot suspension cells.</title>
        <authorList>
            <person name="van Engelen F.A."/>
            <person name="Sterk P."/>
            <person name="Booij H."/>
            <person name="Cordewener J.H.G."/>
            <person name="Rook W."/>
            <person name="van Kammen A."/>
            <person name="de Vries S.C."/>
        </authorList>
    </citation>
    <scope>GLYCOSYLATION</scope>
</reference>
<feature type="signal peptide" evidence="4">
    <location>
        <begin position="1"/>
        <end position="24"/>
    </location>
</feature>
<feature type="chain" id="PRO_0000021187" description="Epidermis-specific secreted glycoprotein EP1">
    <location>
        <begin position="25"/>
        <end position="389"/>
    </location>
</feature>
<feature type="domain" description="Bulb-type lectin" evidence="2">
    <location>
        <begin position="88"/>
        <end position="193"/>
    </location>
</feature>
<feature type="glycosylation site" description="N-linked (GlcNAc...) (complex) asparagine" evidence="3">
    <location>
        <position position="29"/>
    </location>
</feature>
<feature type="glycosylation site" description="N-linked (GlcNAc...) asparagine" evidence="1">
    <location>
        <position position="103"/>
    </location>
</feature>
<feature type="glycosylation site" description="N-linked (GlcNAc...) asparagine" evidence="1">
    <location>
        <position position="230"/>
    </location>
</feature>
<feature type="glycosylation site" description="N-linked (GlcNAc...) asparagine" evidence="1">
    <location>
        <position position="235"/>
    </location>
</feature>
<feature type="glycosylation site" description="N-linked (GlcNAc...) (high mannose) asparagine" evidence="3">
    <location>
        <position position="274"/>
    </location>
</feature>
<feature type="sequence conflict" description="In Ref. 1; AA sequence." evidence="6" ref="1">
    <original>L</original>
    <variation>V</variation>
    <location>
        <position position="25"/>
    </location>
</feature>
<feature type="sequence conflict" description="In Ref. 2; AA sequence." evidence="6" ref="2">
    <original>E</original>
    <variation>A</variation>
    <location>
        <position position="30"/>
    </location>
</feature>
<feature type="sequence conflict" description="In Ref. 2; AA sequence." evidence="6" ref="2">
    <original>L</original>
    <variation>Y</variation>
    <location>
        <position position="277"/>
    </location>
</feature>
<keyword id="KW-0903">Direct protein sequencing</keyword>
<keyword id="KW-0325">Glycoprotein</keyword>
<keyword id="KW-0430">Lectin</keyword>
<keyword id="KW-0964">Secreted</keyword>
<keyword id="KW-0732">Signal</keyword>
<gene>
    <name type="primary">EP1</name>
</gene>
<accession>Q39688</accession>
<proteinExistence type="evidence at protein level"/>
<dbReference type="EMBL" id="L16983">
    <property type="protein sequence ID" value="AAA33136.1"/>
    <property type="molecule type" value="mRNA"/>
</dbReference>
<dbReference type="PIR" id="S36638">
    <property type="entry name" value="S36638"/>
</dbReference>
<dbReference type="SMR" id="Q39688"/>
<dbReference type="GlyCosmos" id="Q39688">
    <property type="glycosylation" value="5 sites, No reported glycans"/>
</dbReference>
<dbReference type="iPTMnet" id="Q39688"/>
<dbReference type="GO" id="GO:0005576">
    <property type="term" value="C:extracellular region"/>
    <property type="evidence" value="ECO:0000314"/>
    <property type="project" value="UniProtKB"/>
</dbReference>
<dbReference type="GO" id="GO:0009505">
    <property type="term" value="C:plant-type cell wall"/>
    <property type="evidence" value="ECO:0007669"/>
    <property type="project" value="TreeGrafter"/>
</dbReference>
<dbReference type="GO" id="GO:0030246">
    <property type="term" value="F:carbohydrate binding"/>
    <property type="evidence" value="ECO:0007669"/>
    <property type="project" value="UniProtKB-KW"/>
</dbReference>
<dbReference type="GO" id="GO:0006833">
    <property type="term" value="P:water transport"/>
    <property type="evidence" value="ECO:0000303"/>
    <property type="project" value="UniProtKB"/>
</dbReference>
<dbReference type="CDD" id="cd00028">
    <property type="entry name" value="B_lectin"/>
    <property type="match status" value="1"/>
</dbReference>
<dbReference type="Gene3D" id="2.90.10.10">
    <property type="entry name" value="Bulb-type lectin domain"/>
    <property type="match status" value="1"/>
</dbReference>
<dbReference type="InterPro" id="IPR001480">
    <property type="entry name" value="Bulb-type_lectin_dom"/>
</dbReference>
<dbReference type="InterPro" id="IPR036426">
    <property type="entry name" value="Bulb-type_lectin_dom_sf"/>
</dbReference>
<dbReference type="InterPro" id="IPR035446">
    <property type="entry name" value="SLSG/EP1"/>
</dbReference>
<dbReference type="PANTHER" id="PTHR32444">
    <property type="entry name" value="BULB-TYPE LECTIN DOMAIN-CONTAINING PROTEIN"/>
    <property type="match status" value="1"/>
</dbReference>
<dbReference type="PANTHER" id="PTHR32444:SF10">
    <property type="entry name" value="CURCULIN-LIKE (MANNOSE-BINDING) LECTIN FAMILY PROTEIN-RELATED"/>
    <property type="match status" value="1"/>
</dbReference>
<dbReference type="Pfam" id="PF01453">
    <property type="entry name" value="B_lectin"/>
    <property type="match status" value="1"/>
</dbReference>
<dbReference type="PIRSF" id="PIRSF002686">
    <property type="entry name" value="SLG"/>
    <property type="match status" value="1"/>
</dbReference>
<dbReference type="SMART" id="SM00108">
    <property type="entry name" value="B_lectin"/>
    <property type="match status" value="1"/>
</dbReference>
<dbReference type="SUPFAM" id="SSF51110">
    <property type="entry name" value="alpha-D-mannose-specific plant lectins"/>
    <property type="match status" value="1"/>
</dbReference>
<dbReference type="PROSITE" id="PS50927">
    <property type="entry name" value="BULB_LECTIN"/>
    <property type="match status" value="1"/>
</dbReference>
<protein>
    <recommendedName>
        <fullName>Epidermis-specific secreted glycoprotein EP1</fullName>
    </recommendedName>
    <alternativeName>
        <fullName>52/54 kDa medium protein</fullName>
    </alternativeName>
</protein>
<comment type="function">
    <text evidence="5">May be involved in the limitation of water flow through the outer epidermal cell wall, either by direct modification of wall structure or as a signal instructing the protoplast to restrict water transport across the cell wall.</text>
</comment>
<comment type="subcellular location">
    <subcellularLocation>
        <location evidence="4">Secreted</location>
    </subcellularLocation>
</comment>
<comment type="tissue specificity">
    <text evidence="4">In 14-day old seedlings, expressed in the epidermis and apical dome of the shoot and in the hypocotyl, cotyledon and epidermis of the root. In developing seeds, expressed in both the inner and outer epidermis of the integument.</text>
</comment>
<organism evidence="7">
    <name type="scientific">Daucus carota</name>
    <name type="common">Wild carrot</name>
    <dbReference type="NCBI Taxonomy" id="4039"/>
    <lineage>
        <taxon>Eukaryota</taxon>
        <taxon>Viridiplantae</taxon>
        <taxon>Streptophyta</taxon>
        <taxon>Embryophyta</taxon>
        <taxon>Tracheophyta</taxon>
        <taxon>Spermatophyta</taxon>
        <taxon>Magnoliopsida</taxon>
        <taxon>eudicotyledons</taxon>
        <taxon>Gunneridae</taxon>
        <taxon>Pentapetalae</taxon>
        <taxon>asterids</taxon>
        <taxon>campanulids</taxon>
        <taxon>Apiales</taxon>
        <taxon>Apiaceae</taxon>
        <taxon>Apioideae</taxon>
        <taxon>Scandiceae</taxon>
        <taxon>Daucinae</taxon>
        <taxon>Daucus</taxon>
        <taxon>Daucus sect. Daucus</taxon>
    </lineage>
</organism>